<feature type="chain" id="PRO_0000400320" description="ATP-dependent zinc metalloprotease FtsH">
    <location>
        <begin position="1"/>
        <end position="666"/>
    </location>
</feature>
<feature type="topological domain" description="Cytoplasmic" evidence="1">
    <location>
        <begin position="1"/>
        <end position="27"/>
    </location>
</feature>
<feature type="transmembrane region" description="Helical" evidence="1">
    <location>
        <begin position="28"/>
        <end position="48"/>
    </location>
</feature>
<feature type="topological domain" description="Extracellular" evidence="1">
    <location>
        <begin position="49"/>
        <end position="125"/>
    </location>
</feature>
<feature type="transmembrane region" description="Helical" evidence="1">
    <location>
        <begin position="126"/>
        <end position="146"/>
    </location>
</feature>
<feature type="topological domain" description="Cytoplasmic" evidence="1">
    <location>
        <begin position="147"/>
        <end position="666"/>
    </location>
</feature>
<feature type="region of interest" description="Disordered" evidence="2">
    <location>
        <begin position="1"/>
        <end position="23"/>
    </location>
</feature>
<feature type="region of interest" description="Disordered" evidence="2">
    <location>
        <begin position="626"/>
        <end position="666"/>
    </location>
</feature>
<feature type="compositionally biased region" description="Low complexity" evidence="2">
    <location>
        <begin position="641"/>
        <end position="653"/>
    </location>
</feature>
<feature type="active site" evidence="1">
    <location>
        <position position="443"/>
    </location>
</feature>
<feature type="binding site" evidence="1">
    <location>
        <begin position="219"/>
        <end position="226"/>
    </location>
    <ligand>
        <name>ATP</name>
        <dbReference type="ChEBI" id="CHEBI:30616"/>
    </ligand>
</feature>
<feature type="binding site" evidence="1">
    <location>
        <position position="442"/>
    </location>
    <ligand>
        <name>Zn(2+)</name>
        <dbReference type="ChEBI" id="CHEBI:29105"/>
        <note>catalytic</note>
    </ligand>
</feature>
<feature type="binding site" evidence="1">
    <location>
        <position position="446"/>
    </location>
    <ligand>
        <name>Zn(2+)</name>
        <dbReference type="ChEBI" id="CHEBI:29105"/>
        <note>catalytic</note>
    </ligand>
</feature>
<feature type="binding site" evidence="1">
    <location>
        <position position="518"/>
    </location>
    <ligand>
        <name>Zn(2+)</name>
        <dbReference type="ChEBI" id="CHEBI:29105"/>
        <note>catalytic</note>
    </ligand>
</feature>
<reference key="1">
    <citation type="journal article" date="2009" name="Genome Res.">
        <title>Complete genome of the cellulolytic thermophile Acidothermus cellulolyticus 11B provides insights into its ecophysiological and evolutionary adaptations.</title>
        <authorList>
            <person name="Barabote R.D."/>
            <person name="Xie G."/>
            <person name="Leu D.H."/>
            <person name="Normand P."/>
            <person name="Necsulea A."/>
            <person name="Daubin V."/>
            <person name="Medigue C."/>
            <person name="Adney W.S."/>
            <person name="Xu X.C."/>
            <person name="Lapidus A."/>
            <person name="Parales R.E."/>
            <person name="Detter C."/>
            <person name="Pujic P."/>
            <person name="Bruce D."/>
            <person name="Lavire C."/>
            <person name="Challacombe J.F."/>
            <person name="Brettin T.S."/>
            <person name="Berry A.M."/>
        </authorList>
    </citation>
    <scope>NUCLEOTIDE SEQUENCE [LARGE SCALE GENOMIC DNA]</scope>
    <source>
        <strain>ATCC 43068 / DSM 8971 / 11B</strain>
    </source>
</reference>
<accession>A0LR74</accession>
<proteinExistence type="inferred from homology"/>
<gene>
    <name evidence="1" type="primary">ftsH</name>
    <name type="ordered locus">Acel_0159</name>
</gene>
<name>FTSH_ACIC1</name>
<protein>
    <recommendedName>
        <fullName evidence="1">ATP-dependent zinc metalloprotease FtsH</fullName>
        <ecNumber evidence="1">3.4.24.-</ecNumber>
    </recommendedName>
</protein>
<sequence>MSREVTSGLPQDKPTGSAPPPPPPWRRWLLPIGLLVSLVLLFTFPMRPSSGKTLTYSEFLTALHHHDIKTITIHSDGEASGQFADGRPYSTTIPIGLAGSQLLNELENNGVQISARPPGPSLASQVLAGVLSFLPFLLLLGLFAYSGRRAGAGFLAGLPGIGRARAKIFTTERPQTRFSDVAGYDGVKAEIAEVVDFLRSPERYRRAGAAIPRGVLMVGPPGTGKTLMARAVAGEAGVPFLSVTGSSFVEMFVGVGASRVRDLFEEARKHAPCIVFVDEIDAIGQRRAGAGTIVANDEREQTLNQLLAEMDGFEPAQGVVVLAATNRPEVLDPALLRPGRFDRQVTVPLPSQADRAAILRVHCRNKRLAPDVDLDAVARATPGFSGAELANLVNEAAIAAARAGRRDLTAEDFRYARDRIILGRREDSNVLLPSERHAVAVHEAGHAVVAACSENADPVERVTILPAGRALGVTFQLPLAERHLYSESYLRDSLAVRLGGRAAELEILGEASTGAVNDLSSATELALRMVREYGLSPRLGPVSYPVGGSMYLPGGQELTPRPYAEATQQRIDQEVADLLRDAEERARDIIRRNRQAVDELASLLLEQESVDGAVVYQLVGRPVPTPEEHREAAARHVRRPGIAAATGASMAGGSEPRTAASSDDLL</sequence>
<comment type="function">
    <text evidence="1">Acts as a processive, ATP-dependent zinc metallopeptidase for both cytoplasmic and membrane proteins. Plays a role in the quality control of integral membrane proteins.</text>
</comment>
<comment type="cofactor">
    <cofactor evidence="1">
        <name>Zn(2+)</name>
        <dbReference type="ChEBI" id="CHEBI:29105"/>
    </cofactor>
    <text evidence="1">Binds 1 zinc ion per subunit.</text>
</comment>
<comment type="subunit">
    <text evidence="1">Homohexamer.</text>
</comment>
<comment type="subcellular location">
    <subcellularLocation>
        <location evidence="1">Cell membrane</location>
        <topology evidence="1">Multi-pass membrane protein</topology>
        <orientation evidence="1">Cytoplasmic side</orientation>
    </subcellularLocation>
</comment>
<comment type="similarity">
    <text evidence="1">In the central section; belongs to the AAA ATPase family.</text>
</comment>
<comment type="similarity">
    <text evidence="1">In the C-terminal section; belongs to the peptidase M41 family.</text>
</comment>
<evidence type="ECO:0000255" key="1">
    <source>
        <dbReference type="HAMAP-Rule" id="MF_01458"/>
    </source>
</evidence>
<evidence type="ECO:0000256" key="2">
    <source>
        <dbReference type="SAM" id="MobiDB-lite"/>
    </source>
</evidence>
<keyword id="KW-0067">ATP-binding</keyword>
<keyword id="KW-1003">Cell membrane</keyword>
<keyword id="KW-0378">Hydrolase</keyword>
<keyword id="KW-0472">Membrane</keyword>
<keyword id="KW-0479">Metal-binding</keyword>
<keyword id="KW-0482">Metalloprotease</keyword>
<keyword id="KW-0547">Nucleotide-binding</keyword>
<keyword id="KW-0645">Protease</keyword>
<keyword id="KW-1185">Reference proteome</keyword>
<keyword id="KW-0812">Transmembrane</keyword>
<keyword id="KW-1133">Transmembrane helix</keyword>
<keyword id="KW-0862">Zinc</keyword>
<dbReference type="EC" id="3.4.24.-" evidence="1"/>
<dbReference type="EMBL" id="CP000481">
    <property type="protein sequence ID" value="ABK51934.1"/>
    <property type="molecule type" value="Genomic_DNA"/>
</dbReference>
<dbReference type="RefSeq" id="WP_011718998.1">
    <property type="nucleotide sequence ID" value="NC_008578.1"/>
</dbReference>
<dbReference type="SMR" id="A0LR74"/>
<dbReference type="STRING" id="351607.Acel_0159"/>
<dbReference type="KEGG" id="ace:Acel_0159"/>
<dbReference type="eggNOG" id="COG0465">
    <property type="taxonomic scope" value="Bacteria"/>
</dbReference>
<dbReference type="HOGENOM" id="CLU_000688_16_2_11"/>
<dbReference type="InParanoid" id="A0LR74"/>
<dbReference type="OrthoDB" id="9809379at2"/>
<dbReference type="Proteomes" id="UP000008221">
    <property type="component" value="Chromosome"/>
</dbReference>
<dbReference type="GO" id="GO:0005886">
    <property type="term" value="C:plasma membrane"/>
    <property type="evidence" value="ECO:0007669"/>
    <property type="project" value="UniProtKB-SubCell"/>
</dbReference>
<dbReference type="GO" id="GO:0005524">
    <property type="term" value="F:ATP binding"/>
    <property type="evidence" value="ECO:0007669"/>
    <property type="project" value="UniProtKB-UniRule"/>
</dbReference>
<dbReference type="GO" id="GO:0016887">
    <property type="term" value="F:ATP hydrolysis activity"/>
    <property type="evidence" value="ECO:0007669"/>
    <property type="project" value="UniProtKB-UniRule"/>
</dbReference>
<dbReference type="GO" id="GO:0004176">
    <property type="term" value="F:ATP-dependent peptidase activity"/>
    <property type="evidence" value="ECO:0007669"/>
    <property type="project" value="InterPro"/>
</dbReference>
<dbReference type="GO" id="GO:0004222">
    <property type="term" value="F:metalloendopeptidase activity"/>
    <property type="evidence" value="ECO:0007669"/>
    <property type="project" value="InterPro"/>
</dbReference>
<dbReference type="GO" id="GO:0008270">
    <property type="term" value="F:zinc ion binding"/>
    <property type="evidence" value="ECO:0007669"/>
    <property type="project" value="UniProtKB-UniRule"/>
</dbReference>
<dbReference type="GO" id="GO:0030163">
    <property type="term" value="P:protein catabolic process"/>
    <property type="evidence" value="ECO:0007669"/>
    <property type="project" value="UniProtKB-UniRule"/>
</dbReference>
<dbReference type="GO" id="GO:0006508">
    <property type="term" value="P:proteolysis"/>
    <property type="evidence" value="ECO:0007669"/>
    <property type="project" value="UniProtKB-KW"/>
</dbReference>
<dbReference type="CDD" id="cd19501">
    <property type="entry name" value="RecA-like_FtsH"/>
    <property type="match status" value="1"/>
</dbReference>
<dbReference type="FunFam" id="1.10.8.60:FF:000001">
    <property type="entry name" value="ATP-dependent zinc metalloprotease FtsH"/>
    <property type="match status" value="1"/>
</dbReference>
<dbReference type="FunFam" id="1.20.58.760:FF:000001">
    <property type="entry name" value="ATP-dependent zinc metalloprotease FtsH"/>
    <property type="match status" value="1"/>
</dbReference>
<dbReference type="FunFam" id="3.40.50.300:FF:000001">
    <property type="entry name" value="ATP-dependent zinc metalloprotease FtsH"/>
    <property type="match status" value="1"/>
</dbReference>
<dbReference type="Gene3D" id="1.10.8.60">
    <property type="match status" value="1"/>
</dbReference>
<dbReference type="Gene3D" id="3.30.720.210">
    <property type="match status" value="1"/>
</dbReference>
<dbReference type="Gene3D" id="3.40.50.300">
    <property type="entry name" value="P-loop containing nucleotide triphosphate hydrolases"/>
    <property type="match status" value="1"/>
</dbReference>
<dbReference type="Gene3D" id="1.20.58.760">
    <property type="entry name" value="Peptidase M41"/>
    <property type="match status" value="1"/>
</dbReference>
<dbReference type="HAMAP" id="MF_01458">
    <property type="entry name" value="FtsH"/>
    <property type="match status" value="1"/>
</dbReference>
<dbReference type="InterPro" id="IPR003593">
    <property type="entry name" value="AAA+_ATPase"/>
</dbReference>
<dbReference type="InterPro" id="IPR041569">
    <property type="entry name" value="AAA_lid_3"/>
</dbReference>
<dbReference type="InterPro" id="IPR003959">
    <property type="entry name" value="ATPase_AAA_core"/>
</dbReference>
<dbReference type="InterPro" id="IPR003960">
    <property type="entry name" value="ATPase_AAA_CS"/>
</dbReference>
<dbReference type="InterPro" id="IPR005936">
    <property type="entry name" value="FtsH"/>
</dbReference>
<dbReference type="InterPro" id="IPR027417">
    <property type="entry name" value="P-loop_NTPase"/>
</dbReference>
<dbReference type="InterPro" id="IPR011546">
    <property type="entry name" value="Pept_M41_FtsH_extracell"/>
</dbReference>
<dbReference type="InterPro" id="IPR000642">
    <property type="entry name" value="Peptidase_M41"/>
</dbReference>
<dbReference type="InterPro" id="IPR037219">
    <property type="entry name" value="Peptidase_M41-like"/>
</dbReference>
<dbReference type="NCBIfam" id="TIGR01241">
    <property type="entry name" value="FtsH_fam"/>
    <property type="match status" value="1"/>
</dbReference>
<dbReference type="PANTHER" id="PTHR23076:SF97">
    <property type="entry name" value="ATP-DEPENDENT ZINC METALLOPROTEASE YME1L1"/>
    <property type="match status" value="1"/>
</dbReference>
<dbReference type="PANTHER" id="PTHR23076">
    <property type="entry name" value="METALLOPROTEASE M41 FTSH"/>
    <property type="match status" value="1"/>
</dbReference>
<dbReference type="Pfam" id="PF00004">
    <property type="entry name" value="AAA"/>
    <property type="match status" value="1"/>
</dbReference>
<dbReference type="Pfam" id="PF17862">
    <property type="entry name" value="AAA_lid_3"/>
    <property type="match status" value="1"/>
</dbReference>
<dbReference type="Pfam" id="PF06480">
    <property type="entry name" value="FtsH_ext"/>
    <property type="match status" value="1"/>
</dbReference>
<dbReference type="Pfam" id="PF01434">
    <property type="entry name" value="Peptidase_M41"/>
    <property type="match status" value="1"/>
</dbReference>
<dbReference type="SMART" id="SM00382">
    <property type="entry name" value="AAA"/>
    <property type="match status" value="1"/>
</dbReference>
<dbReference type="SUPFAM" id="SSF140990">
    <property type="entry name" value="FtsH protease domain-like"/>
    <property type="match status" value="1"/>
</dbReference>
<dbReference type="SUPFAM" id="SSF52540">
    <property type="entry name" value="P-loop containing nucleoside triphosphate hydrolases"/>
    <property type="match status" value="1"/>
</dbReference>
<dbReference type="PROSITE" id="PS00674">
    <property type="entry name" value="AAA"/>
    <property type="match status" value="1"/>
</dbReference>
<organism>
    <name type="scientific">Acidothermus cellulolyticus (strain ATCC 43068 / DSM 8971 / 11B)</name>
    <dbReference type="NCBI Taxonomy" id="351607"/>
    <lineage>
        <taxon>Bacteria</taxon>
        <taxon>Bacillati</taxon>
        <taxon>Actinomycetota</taxon>
        <taxon>Actinomycetes</taxon>
        <taxon>Acidothermales</taxon>
        <taxon>Acidothermaceae</taxon>
        <taxon>Acidothermus</taxon>
    </lineage>
</organism>